<sequence>MSLFEAIILGIAQGLTEFLPISSTAHLRIVPALAGWQDPGAAFTAIVQIGTLIAVLIYFFRDIVTISGAVIKGLMNASPLGTPDAKMGWMIAAGTIPIVVFGLLFKTEIETSLRSLYWISAALITLAIILSLAEWLIKKRIAKGIEPKSMSDIRWKEALIIGLVQSIALIPGSSRSGVTITGGLFMNLSRETAARFSFLLSLPAVFAAGIYQLYKSWDSLMASTNDLVNLIVATLVAGIVGYASIAFLITFLKQHSTAVFIIYRIALGLTILALIATGNVQA</sequence>
<protein>
    <recommendedName>
        <fullName evidence="1">Undecaprenyl-diphosphatase</fullName>
        <ecNumber evidence="1">3.6.1.27</ecNumber>
    </recommendedName>
    <alternativeName>
        <fullName evidence="1">Bacitracin resistance protein</fullName>
    </alternativeName>
    <alternativeName>
        <fullName evidence="1">Undecaprenyl pyrophosphate phosphatase</fullName>
    </alternativeName>
</protein>
<feature type="chain" id="PRO_1000197390" description="Undecaprenyl-diphosphatase">
    <location>
        <begin position="1"/>
        <end position="282"/>
    </location>
</feature>
<feature type="transmembrane region" description="Helical" evidence="1">
    <location>
        <begin position="40"/>
        <end position="60"/>
    </location>
</feature>
<feature type="transmembrane region" description="Helical" evidence="1">
    <location>
        <begin position="85"/>
        <end position="105"/>
    </location>
</feature>
<feature type="transmembrane region" description="Helical" evidence="1">
    <location>
        <begin position="117"/>
        <end position="137"/>
    </location>
</feature>
<feature type="transmembrane region" description="Helical" evidence="1">
    <location>
        <begin position="158"/>
        <end position="178"/>
    </location>
</feature>
<feature type="transmembrane region" description="Helical" evidence="1">
    <location>
        <begin position="193"/>
        <end position="213"/>
    </location>
</feature>
<feature type="transmembrane region" description="Helical" evidence="1">
    <location>
        <begin position="231"/>
        <end position="251"/>
    </location>
</feature>
<feature type="transmembrane region" description="Helical" evidence="1">
    <location>
        <begin position="258"/>
        <end position="278"/>
    </location>
</feature>
<comment type="function">
    <text evidence="1">Catalyzes the dephosphorylation of undecaprenyl diphosphate (UPP). Confers resistance to bacitracin.</text>
</comment>
<comment type="catalytic activity">
    <reaction evidence="1">
        <text>di-trans,octa-cis-undecaprenyl diphosphate + H2O = di-trans,octa-cis-undecaprenyl phosphate + phosphate + H(+)</text>
        <dbReference type="Rhea" id="RHEA:28094"/>
        <dbReference type="ChEBI" id="CHEBI:15377"/>
        <dbReference type="ChEBI" id="CHEBI:15378"/>
        <dbReference type="ChEBI" id="CHEBI:43474"/>
        <dbReference type="ChEBI" id="CHEBI:58405"/>
        <dbReference type="ChEBI" id="CHEBI:60392"/>
        <dbReference type="EC" id="3.6.1.27"/>
    </reaction>
</comment>
<comment type="subcellular location">
    <subcellularLocation>
        <location evidence="1">Cell inner membrane</location>
        <topology evidence="1">Multi-pass membrane protein</topology>
    </subcellularLocation>
</comment>
<comment type="miscellaneous">
    <text>Bacitracin is thought to be involved in the inhibition of peptidoglycan synthesis by sequestering undecaprenyl diphosphate, thereby reducing the pool of lipid carrier available.</text>
</comment>
<comment type="similarity">
    <text evidence="1">Belongs to the UppP family.</text>
</comment>
<organism>
    <name type="scientific">Prosthecochloris aestuarii (strain DSM 271 / SK 413)</name>
    <dbReference type="NCBI Taxonomy" id="290512"/>
    <lineage>
        <taxon>Bacteria</taxon>
        <taxon>Pseudomonadati</taxon>
        <taxon>Chlorobiota</taxon>
        <taxon>Chlorobiia</taxon>
        <taxon>Chlorobiales</taxon>
        <taxon>Chlorobiaceae</taxon>
        <taxon>Prosthecochloris</taxon>
    </lineage>
</organism>
<proteinExistence type="inferred from homology"/>
<gene>
    <name evidence="1" type="primary">uppP</name>
    <name type="ordered locus">Paes_1692</name>
</gene>
<evidence type="ECO:0000255" key="1">
    <source>
        <dbReference type="HAMAP-Rule" id="MF_01006"/>
    </source>
</evidence>
<name>UPPP_PROA2</name>
<keyword id="KW-0046">Antibiotic resistance</keyword>
<keyword id="KW-0997">Cell inner membrane</keyword>
<keyword id="KW-1003">Cell membrane</keyword>
<keyword id="KW-0133">Cell shape</keyword>
<keyword id="KW-0961">Cell wall biogenesis/degradation</keyword>
<keyword id="KW-0378">Hydrolase</keyword>
<keyword id="KW-0472">Membrane</keyword>
<keyword id="KW-0573">Peptidoglycan synthesis</keyword>
<keyword id="KW-0812">Transmembrane</keyword>
<keyword id="KW-1133">Transmembrane helix</keyword>
<dbReference type="EC" id="3.6.1.27" evidence="1"/>
<dbReference type="EMBL" id="CP001108">
    <property type="protein sequence ID" value="ACF46710.1"/>
    <property type="molecule type" value="Genomic_DNA"/>
</dbReference>
<dbReference type="RefSeq" id="WP_012506243.1">
    <property type="nucleotide sequence ID" value="NC_011059.1"/>
</dbReference>
<dbReference type="SMR" id="B4S3H1"/>
<dbReference type="STRING" id="290512.Paes_1692"/>
<dbReference type="KEGG" id="paa:Paes_1692"/>
<dbReference type="eggNOG" id="COG1968">
    <property type="taxonomic scope" value="Bacteria"/>
</dbReference>
<dbReference type="HOGENOM" id="CLU_060296_1_0_10"/>
<dbReference type="Proteomes" id="UP000002725">
    <property type="component" value="Chromosome"/>
</dbReference>
<dbReference type="GO" id="GO:0005886">
    <property type="term" value="C:plasma membrane"/>
    <property type="evidence" value="ECO:0007669"/>
    <property type="project" value="UniProtKB-SubCell"/>
</dbReference>
<dbReference type="GO" id="GO:0050380">
    <property type="term" value="F:undecaprenyl-diphosphatase activity"/>
    <property type="evidence" value="ECO:0007669"/>
    <property type="project" value="UniProtKB-UniRule"/>
</dbReference>
<dbReference type="GO" id="GO:0071555">
    <property type="term" value="P:cell wall organization"/>
    <property type="evidence" value="ECO:0007669"/>
    <property type="project" value="UniProtKB-KW"/>
</dbReference>
<dbReference type="GO" id="GO:0009252">
    <property type="term" value="P:peptidoglycan biosynthetic process"/>
    <property type="evidence" value="ECO:0007669"/>
    <property type="project" value="UniProtKB-KW"/>
</dbReference>
<dbReference type="GO" id="GO:0008360">
    <property type="term" value="P:regulation of cell shape"/>
    <property type="evidence" value="ECO:0007669"/>
    <property type="project" value="UniProtKB-KW"/>
</dbReference>
<dbReference type="GO" id="GO:0046677">
    <property type="term" value="P:response to antibiotic"/>
    <property type="evidence" value="ECO:0007669"/>
    <property type="project" value="UniProtKB-UniRule"/>
</dbReference>
<dbReference type="HAMAP" id="MF_01006">
    <property type="entry name" value="Undec_diphosphatase"/>
    <property type="match status" value="1"/>
</dbReference>
<dbReference type="InterPro" id="IPR003824">
    <property type="entry name" value="UppP"/>
</dbReference>
<dbReference type="NCBIfam" id="TIGR00753">
    <property type="entry name" value="undec_PP_bacA"/>
    <property type="match status" value="1"/>
</dbReference>
<dbReference type="PANTHER" id="PTHR30622">
    <property type="entry name" value="UNDECAPRENYL-DIPHOSPHATASE"/>
    <property type="match status" value="1"/>
</dbReference>
<dbReference type="PANTHER" id="PTHR30622:SF4">
    <property type="entry name" value="UNDECAPRENYL-DIPHOSPHATASE"/>
    <property type="match status" value="1"/>
</dbReference>
<dbReference type="Pfam" id="PF02673">
    <property type="entry name" value="BacA"/>
    <property type="match status" value="1"/>
</dbReference>
<accession>B4S3H1</accession>
<reference key="1">
    <citation type="submission" date="2008-06" db="EMBL/GenBank/DDBJ databases">
        <title>Complete sequence of chromosome of Prosthecochloris aestuarii DSM 271.</title>
        <authorList>
            <consortium name="US DOE Joint Genome Institute"/>
            <person name="Lucas S."/>
            <person name="Copeland A."/>
            <person name="Lapidus A."/>
            <person name="Glavina del Rio T."/>
            <person name="Dalin E."/>
            <person name="Tice H."/>
            <person name="Bruce D."/>
            <person name="Goodwin L."/>
            <person name="Pitluck S."/>
            <person name="Schmutz J."/>
            <person name="Larimer F."/>
            <person name="Land M."/>
            <person name="Hauser L."/>
            <person name="Kyrpides N."/>
            <person name="Anderson I."/>
            <person name="Liu Z."/>
            <person name="Li T."/>
            <person name="Zhao F."/>
            <person name="Overmann J."/>
            <person name="Bryant D.A."/>
            <person name="Richardson P."/>
        </authorList>
    </citation>
    <scope>NUCLEOTIDE SEQUENCE [LARGE SCALE GENOMIC DNA]</scope>
    <source>
        <strain>DSM 271 / SK 413</strain>
    </source>
</reference>